<sequence>MPQAEDKRQAAREVIDILHEISTLLNTNLDRTELSLCVSLIENGVNPDALAAVIADLRKETAPTSRHVLPE</sequence>
<accession>A1CQI3</accession>
<reference key="1">
    <citation type="journal article" date="2008" name="PLoS Genet.">
        <title>Genomic islands in the pathogenic filamentous fungus Aspergillus fumigatus.</title>
        <authorList>
            <person name="Fedorova N.D."/>
            <person name="Khaldi N."/>
            <person name="Joardar V.S."/>
            <person name="Maiti R."/>
            <person name="Amedeo P."/>
            <person name="Anderson M.J."/>
            <person name="Crabtree J."/>
            <person name="Silva J.C."/>
            <person name="Badger J.H."/>
            <person name="Albarraq A."/>
            <person name="Angiuoli S."/>
            <person name="Bussey H."/>
            <person name="Bowyer P."/>
            <person name="Cotty P.J."/>
            <person name="Dyer P.S."/>
            <person name="Egan A."/>
            <person name="Galens K."/>
            <person name="Fraser-Liggett C.M."/>
            <person name="Haas B.J."/>
            <person name="Inman J.M."/>
            <person name="Kent R."/>
            <person name="Lemieux S."/>
            <person name="Malavazi I."/>
            <person name="Orvis J."/>
            <person name="Roemer T."/>
            <person name="Ronning C.M."/>
            <person name="Sundaram J.P."/>
            <person name="Sutton G."/>
            <person name="Turner G."/>
            <person name="Venter J.C."/>
            <person name="White O.R."/>
            <person name="Whitty B.R."/>
            <person name="Youngman P."/>
            <person name="Wolfe K.H."/>
            <person name="Goldman G.H."/>
            <person name="Wortman J.R."/>
            <person name="Jiang B."/>
            <person name="Denning D.W."/>
            <person name="Nierman W.C."/>
        </authorList>
    </citation>
    <scope>NUCLEOTIDE SEQUENCE [LARGE SCALE GENOMIC DNA]</scope>
    <source>
        <strain>ATCC 1007 / CBS 513.65 / DSM 816 / NCTC 3887 / NRRL 1 / QM 1276 / 107</strain>
    </source>
</reference>
<organism>
    <name type="scientific">Aspergillus clavatus (strain ATCC 1007 / CBS 513.65 / DSM 816 / NCTC 3887 / NRRL 1 / QM 1276 / 107)</name>
    <dbReference type="NCBI Taxonomy" id="344612"/>
    <lineage>
        <taxon>Eukaryota</taxon>
        <taxon>Fungi</taxon>
        <taxon>Dikarya</taxon>
        <taxon>Ascomycota</taxon>
        <taxon>Pezizomycotina</taxon>
        <taxon>Eurotiomycetes</taxon>
        <taxon>Eurotiomycetidae</taxon>
        <taxon>Eurotiales</taxon>
        <taxon>Aspergillaceae</taxon>
        <taxon>Aspergillus</taxon>
        <taxon>Aspergillus subgen. Fumigati</taxon>
    </lineage>
</organism>
<evidence type="ECO:0000250" key="1"/>
<evidence type="ECO:0000305" key="2"/>
<name>MZT1_ASPCL</name>
<protein>
    <recommendedName>
        <fullName>Mitotic-spindle organizing protein 1</fullName>
    </recommendedName>
    <alternativeName>
        <fullName>Mitotic-spindle organizing protein associated with a ring of gamma-tubulin 1</fullName>
    </alternativeName>
</protein>
<comment type="function">
    <text evidence="1">Required for gamma-tubulin complex recruitment to the microtubule organizing center (MTOC).</text>
</comment>
<comment type="subunit">
    <text evidence="1">Part of the gamma-tubulin complex.</text>
</comment>
<comment type="subcellular location">
    <subcellularLocation>
        <location evidence="1">Cytoplasm</location>
        <location evidence="1">Cytoskeleton</location>
        <location evidence="1">Microtubule organizing center</location>
        <location evidence="1">Spindle pole body</location>
    </subcellularLocation>
</comment>
<comment type="similarity">
    <text evidence="2">Belongs to the MOZART1 family.</text>
</comment>
<proteinExistence type="inferred from homology"/>
<gene>
    <name type="ORF">ACLA_026210</name>
</gene>
<dbReference type="EMBL" id="DS027059">
    <property type="protein sequence ID" value="EAW07904.1"/>
    <property type="molecule type" value="Genomic_DNA"/>
</dbReference>
<dbReference type="RefSeq" id="XP_001269330.1">
    <property type="nucleotide sequence ID" value="XM_001269329.1"/>
</dbReference>
<dbReference type="SMR" id="A1CQI3"/>
<dbReference type="STRING" id="344612.A1CQI3"/>
<dbReference type="EnsemblFungi" id="EAW07904">
    <property type="protein sequence ID" value="EAW07904"/>
    <property type="gene ID" value="ACLA_026210"/>
</dbReference>
<dbReference type="GeneID" id="4701785"/>
<dbReference type="KEGG" id="act:ACLA_026210"/>
<dbReference type="VEuPathDB" id="FungiDB:ACLA_026210"/>
<dbReference type="eggNOG" id="ENOG502S6UI">
    <property type="taxonomic scope" value="Eukaryota"/>
</dbReference>
<dbReference type="HOGENOM" id="CLU_160285_0_1_1"/>
<dbReference type="OMA" id="LSICVGM"/>
<dbReference type="OrthoDB" id="48571at2759"/>
<dbReference type="Proteomes" id="UP000006701">
    <property type="component" value="Unassembled WGS sequence"/>
</dbReference>
<dbReference type="GO" id="GO:0005737">
    <property type="term" value="C:cytoplasm"/>
    <property type="evidence" value="ECO:0007669"/>
    <property type="project" value="UniProtKB-KW"/>
</dbReference>
<dbReference type="GO" id="GO:0000931">
    <property type="term" value="C:gamma-tubulin ring complex"/>
    <property type="evidence" value="ECO:0007669"/>
    <property type="project" value="InterPro"/>
</dbReference>
<dbReference type="GO" id="GO:0031021">
    <property type="term" value="C:interphase microtubule organizing center"/>
    <property type="evidence" value="ECO:0007669"/>
    <property type="project" value="TreeGrafter"/>
</dbReference>
<dbReference type="GO" id="GO:0044732">
    <property type="term" value="C:mitotic spindle pole body"/>
    <property type="evidence" value="ECO:0007669"/>
    <property type="project" value="TreeGrafter"/>
</dbReference>
<dbReference type="GO" id="GO:0005819">
    <property type="term" value="C:spindle"/>
    <property type="evidence" value="ECO:0007669"/>
    <property type="project" value="TreeGrafter"/>
</dbReference>
<dbReference type="GO" id="GO:0033566">
    <property type="term" value="P:gamma-tubulin complex localization"/>
    <property type="evidence" value="ECO:0007669"/>
    <property type="project" value="InterPro"/>
</dbReference>
<dbReference type="GO" id="GO:0051415">
    <property type="term" value="P:microtubule nucleation by interphase microtubule organizing center"/>
    <property type="evidence" value="ECO:0007669"/>
    <property type="project" value="TreeGrafter"/>
</dbReference>
<dbReference type="GO" id="GO:0090307">
    <property type="term" value="P:mitotic spindle assembly"/>
    <property type="evidence" value="ECO:0007669"/>
    <property type="project" value="TreeGrafter"/>
</dbReference>
<dbReference type="InterPro" id="IPR022214">
    <property type="entry name" value="MZT1"/>
</dbReference>
<dbReference type="PANTHER" id="PTHR28520">
    <property type="entry name" value="MITOTIC-SPINDLE ORGANIZING PROTEIN 1"/>
    <property type="match status" value="1"/>
</dbReference>
<dbReference type="PANTHER" id="PTHR28520:SF2">
    <property type="entry name" value="MITOTIC-SPINDLE ORGANIZING PROTEIN 1"/>
    <property type="match status" value="1"/>
</dbReference>
<dbReference type="Pfam" id="PF12554">
    <property type="entry name" value="MOZART1"/>
    <property type="match status" value="1"/>
</dbReference>
<keyword id="KW-0963">Cytoplasm</keyword>
<keyword id="KW-0206">Cytoskeleton</keyword>
<keyword id="KW-1185">Reference proteome</keyword>
<feature type="chain" id="PRO_0000365079" description="Mitotic-spindle organizing protein 1">
    <location>
        <begin position="1"/>
        <end position="71"/>
    </location>
</feature>